<dbReference type="EMBL" id="AK044685">
    <property type="status" value="NOT_ANNOTATED_CDS"/>
    <property type="molecule type" value="mRNA"/>
</dbReference>
<dbReference type="EMBL" id="AC110566">
    <property type="status" value="NOT_ANNOTATED_CDS"/>
    <property type="molecule type" value="Genomic_DNA"/>
</dbReference>
<dbReference type="EMBL" id="AC111089">
    <property type="status" value="NOT_ANNOTATED_CDS"/>
    <property type="molecule type" value="Genomic_DNA"/>
</dbReference>
<dbReference type="EMBL" id="AC116715">
    <property type="status" value="NOT_ANNOTATED_CDS"/>
    <property type="molecule type" value="Genomic_DNA"/>
</dbReference>
<dbReference type="EMBL" id="BC151100">
    <property type="protein sequence ID" value="AAI51101.1"/>
    <property type="molecule type" value="mRNA"/>
</dbReference>
<dbReference type="EMBL" id="BC151101">
    <property type="protein sequence ID" value="AAI51102.1"/>
    <property type="molecule type" value="mRNA"/>
</dbReference>
<dbReference type="EMBL" id="AK122245">
    <property type="protein sequence ID" value="BAC65527.2"/>
    <property type="molecule type" value="mRNA"/>
</dbReference>
<dbReference type="RefSeq" id="NP_001074857.1">
    <property type="nucleotide sequence ID" value="NM_001081388.2"/>
</dbReference>
<dbReference type="RefSeq" id="NP_001297662.1">
    <property type="nucleotide sequence ID" value="NM_001310733.1"/>
</dbReference>
<dbReference type="SMR" id="Q80U40"/>
<dbReference type="BioGRID" id="231164">
    <property type="interactions" value="3"/>
</dbReference>
<dbReference type="FunCoup" id="Q80U40">
    <property type="interactions" value="114"/>
</dbReference>
<dbReference type="IntAct" id="Q80U40">
    <property type="interactions" value="2"/>
</dbReference>
<dbReference type="MINT" id="Q80U40"/>
<dbReference type="STRING" id="10090.ENSMUSP00000142455"/>
<dbReference type="GlyGen" id="Q80U40">
    <property type="glycosylation" value="4 sites, 1 N-linked glycan (1 site), 1 O-linked glycan (3 sites)"/>
</dbReference>
<dbReference type="iPTMnet" id="Q80U40"/>
<dbReference type="PhosphoSitePlus" id="Q80U40"/>
<dbReference type="SwissPalm" id="Q80U40"/>
<dbReference type="PaxDb" id="10090-ENSMUSP00000106978"/>
<dbReference type="ProteomicsDB" id="255221">
    <molecule id="Q80U40-1"/>
</dbReference>
<dbReference type="ProteomicsDB" id="255222">
    <molecule id="Q80U40-2"/>
</dbReference>
<dbReference type="Antibodypedia" id="65349">
    <property type="antibodies" value="46 antibodies from 13 providers"/>
</dbReference>
<dbReference type="DNASU" id="231760"/>
<dbReference type="Ensembl" id="ENSMUST00000199537.5">
    <molecule id="Q80U40-2"/>
    <property type="protein sequence ID" value="ENSMUSP00000143276.2"/>
    <property type="gene ID" value="ENSMUSG00000029420.15"/>
</dbReference>
<dbReference type="GeneID" id="231760"/>
<dbReference type="KEGG" id="mmu:231760"/>
<dbReference type="UCSC" id="uc008zsk.2">
    <molecule id="Q80U40-2"/>
    <property type="organism name" value="mouse"/>
</dbReference>
<dbReference type="UCSC" id="uc008zsm.1">
    <molecule id="Q80U40-1"/>
    <property type="organism name" value="mouse"/>
</dbReference>
<dbReference type="AGR" id="MGI:2443235"/>
<dbReference type="CTD" id="23504"/>
<dbReference type="MGI" id="MGI:2443235">
    <property type="gene designation" value="Rimbp2"/>
</dbReference>
<dbReference type="VEuPathDB" id="HostDB:ENSMUSG00000029420"/>
<dbReference type="eggNOG" id="KOG3632">
    <property type="taxonomic scope" value="Eukaryota"/>
</dbReference>
<dbReference type="GeneTree" id="ENSGT00950000183203"/>
<dbReference type="InParanoid" id="Q80U40"/>
<dbReference type="BioGRID-ORCS" id="231760">
    <property type="hits" value="4 hits in 78 CRISPR screens"/>
</dbReference>
<dbReference type="CD-CODE" id="CE726F99">
    <property type="entry name" value="Postsynaptic density"/>
</dbReference>
<dbReference type="ChiTaRS" id="Rimbp2">
    <property type="organism name" value="mouse"/>
</dbReference>
<dbReference type="PRO" id="PR:Q80U40"/>
<dbReference type="Proteomes" id="UP000000589">
    <property type="component" value="Chromosome 5"/>
</dbReference>
<dbReference type="RNAct" id="Q80U40">
    <property type="molecule type" value="protein"/>
</dbReference>
<dbReference type="Bgee" id="ENSMUSG00000029420">
    <property type="expression patterns" value="Expressed in visual cortex and 102 other cell types or tissues"/>
</dbReference>
<dbReference type="ExpressionAtlas" id="Q80U40">
    <property type="expression patterns" value="baseline and differential"/>
</dbReference>
<dbReference type="GO" id="GO:0044305">
    <property type="term" value="C:calyx of Held"/>
    <property type="evidence" value="ECO:0000314"/>
    <property type="project" value="SynGO"/>
</dbReference>
<dbReference type="GO" id="GO:0098978">
    <property type="term" value="C:glutamatergic synapse"/>
    <property type="evidence" value="ECO:0000314"/>
    <property type="project" value="SynGO"/>
</dbReference>
<dbReference type="GO" id="GO:0005886">
    <property type="term" value="C:plasma membrane"/>
    <property type="evidence" value="ECO:0007669"/>
    <property type="project" value="UniProtKB-SubCell"/>
</dbReference>
<dbReference type="GO" id="GO:0098831">
    <property type="term" value="C:presynaptic active zone cytoplasmic component"/>
    <property type="evidence" value="ECO:0000314"/>
    <property type="project" value="SynGO"/>
</dbReference>
<dbReference type="GO" id="GO:0098882">
    <property type="term" value="F:structural constituent of presynaptic active zone"/>
    <property type="evidence" value="ECO:0000314"/>
    <property type="project" value="SynGO"/>
</dbReference>
<dbReference type="GO" id="GO:0099626">
    <property type="term" value="F:voltage-gated calcium channel activity involved in regulation of presynaptic cytosolic calcium levels"/>
    <property type="evidence" value="ECO:0000314"/>
    <property type="project" value="SynGO"/>
</dbReference>
<dbReference type="GO" id="GO:0099508">
    <property type="term" value="F:voltage-gated monoatomic ion channel activity involved in regulation of presynaptic membrane potential"/>
    <property type="evidence" value="ECO:0000314"/>
    <property type="project" value="SynGO"/>
</dbReference>
<dbReference type="GO" id="GO:0150037">
    <property type="term" value="P:regulation of calcium-dependent activation of synaptic vesicle fusion"/>
    <property type="evidence" value="ECO:0000314"/>
    <property type="project" value="SynGO"/>
</dbReference>
<dbReference type="GO" id="GO:0099505">
    <property type="term" value="P:regulation of presynaptic membrane potential"/>
    <property type="evidence" value="ECO:0000314"/>
    <property type="project" value="SynGO"/>
</dbReference>
<dbReference type="CDD" id="cd00063">
    <property type="entry name" value="FN3"/>
    <property type="match status" value="3"/>
</dbReference>
<dbReference type="CDD" id="cd12014">
    <property type="entry name" value="SH3_RIM-BP_1"/>
    <property type="match status" value="1"/>
</dbReference>
<dbReference type="CDD" id="cd12012">
    <property type="entry name" value="SH3_RIM-BP_2"/>
    <property type="match status" value="1"/>
</dbReference>
<dbReference type="CDD" id="cd12013">
    <property type="entry name" value="SH3_RIM-BP_3"/>
    <property type="match status" value="1"/>
</dbReference>
<dbReference type="FunFam" id="2.30.30.40:FF:000023">
    <property type="entry name" value="RIMS-binding protein 2 isoform F"/>
    <property type="match status" value="1"/>
</dbReference>
<dbReference type="FunFam" id="2.30.30.40:FF:000006">
    <property type="entry name" value="RIMS-binding protein 2 isoform X1"/>
    <property type="match status" value="1"/>
</dbReference>
<dbReference type="FunFam" id="2.60.40.10:FF:000072">
    <property type="entry name" value="RIMS-binding protein 2 isoform X1"/>
    <property type="match status" value="1"/>
</dbReference>
<dbReference type="FunFam" id="2.60.40.10:FF:000643">
    <property type="entry name" value="RIMS-binding protein 2 isoform X1"/>
    <property type="match status" value="1"/>
</dbReference>
<dbReference type="FunFam" id="2.30.30.40:FF:000016">
    <property type="entry name" value="RIMS-binding protein 2 isoform X2"/>
    <property type="match status" value="1"/>
</dbReference>
<dbReference type="Gene3D" id="2.60.40.10">
    <property type="entry name" value="Immunoglobulins"/>
    <property type="match status" value="3"/>
</dbReference>
<dbReference type="Gene3D" id="2.30.30.40">
    <property type="entry name" value="SH3 Domains"/>
    <property type="match status" value="3"/>
</dbReference>
<dbReference type="InterPro" id="IPR003961">
    <property type="entry name" value="FN3_dom"/>
</dbReference>
<dbReference type="InterPro" id="IPR036116">
    <property type="entry name" value="FN3_sf"/>
</dbReference>
<dbReference type="InterPro" id="IPR013783">
    <property type="entry name" value="Ig-like_fold"/>
</dbReference>
<dbReference type="InterPro" id="IPR035753">
    <property type="entry name" value="RIM-BP_SH3_2"/>
</dbReference>
<dbReference type="InterPro" id="IPR035755">
    <property type="entry name" value="RIM-BP_SH3_3"/>
</dbReference>
<dbReference type="InterPro" id="IPR040325">
    <property type="entry name" value="RIMBP1/2/3"/>
</dbReference>
<dbReference type="InterPro" id="IPR036028">
    <property type="entry name" value="SH3-like_dom_sf"/>
</dbReference>
<dbReference type="InterPro" id="IPR001452">
    <property type="entry name" value="SH3_domain"/>
</dbReference>
<dbReference type="PANTHER" id="PTHR14234">
    <property type="entry name" value="RIM BINDING PROTEIN-RELATED"/>
    <property type="match status" value="1"/>
</dbReference>
<dbReference type="PANTHER" id="PTHR14234:SF18">
    <property type="entry name" value="RIMS-BINDING PROTEIN 2"/>
    <property type="match status" value="1"/>
</dbReference>
<dbReference type="Pfam" id="PF00041">
    <property type="entry name" value="fn3"/>
    <property type="match status" value="1"/>
</dbReference>
<dbReference type="Pfam" id="PF07653">
    <property type="entry name" value="SH3_2"/>
    <property type="match status" value="1"/>
</dbReference>
<dbReference type="Pfam" id="PF14604">
    <property type="entry name" value="SH3_9"/>
    <property type="match status" value="2"/>
</dbReference>
<dbReference type="PRINTS" id="PR00452">
    <property type="entry name" value="SH3DOMAIN"/>
</dbReference>
<dbReference type="SMART" id="SM00060">
    <property type="entry name" value="FN3"/>
    <property type="match status" value="3"/>
</dbReference>
<dbReference type="SMART" id="SM00326">
    <property type="entry name" value="SH3"/>
    <property type="match status" value="3"/>
</dbReference>
<dbReference type="SUPFAM" id="SSF49265">
    <property type="entry name" value="Fibronectin type III"/>
    <property type="match status" value="2"/>
</dbReference>
<dbReference type="SUPFAM" id="SSF50044">
    <property type="entry name" value="SH3-domain"/>
    <property type="match status" value="3"/>
</dbReference>
<dbReference type="PROSITE" id="PS50853">
    <property type="entry name" value="FN3"/>
    <property type="match status" value="3"/>
</dbReference>
<dbReference type="PROSITE" id="PS50002">
    <property type="entry name" value="SH3"/>
    <property type="match status" value="3"/>
</dbReference>
<accession>Q80U40</accession>
<accession>B9EKT4</accession>
<accession>E9QPF5</accession>
<comment type="function">
    <text evidence="1">Plays a role in the synaptic transmission as bifunctional linker that interacts simultaneously with RIMS1, RIMS2, CACNA1D and CACNA1B.</text>
</comment>
<comment type="subunit">
    <text evidence="1">Interacts with RIMS1, RIMS2, CACNA1D and CACNA1B, and potentially with other Ca(2+) channel alpha-1 isoforms.</text>
</comment>
<comment type="subcellular location">
    <subcellularLocation>
        <location evidence="1">Cell membrane</location>
    </subcellularLocation>
    <subcellularLocation>
        <location evidence="1">Synapse</location>
    </subcellularLocation>
    <text evidence="1">Synaptic plasma membrane.</text>
</comment>
<comment type="alternative products">
    <event type="alternative splicing"/>
    <isoform>
        <id>Q80U40-1</id>
        <name>1</name>
        <sequence type="displayed"/>
    </isoform>
    <isoform>
        <id>Q80U40-2</id>
        <name>2</name>
        <sequence type="described" ref="VSP_037437"/>
    </isoform>
</comment>
<comment type="domain">
    <text evidence="1">The SH3 domains mediate binding to a proline-rich motif in RIMS1, RIMS2, CACNA1D and CACNA1B.</text>
</comment>
<comment type="similarity">
    <text evidence="7">Belongs to the RIMBP family.</text>
</comment>
<reference key="1">
    <citation type="journal article" date="2005" name="Science">
        <title>The transcriptional landscape of the mammalian genome.</title>
        <authorList>
            <person name="Carninci P."/>
            <person name="Kasukawa T."/>
            <person name="Katayama S."/>
            <person name="Gough J."/>
            <person name="Frith M.C."/>
            <person name="Maeda N."/>
            <person name="Oyama R."/>
            <person name="Ravasi T."/>
            <person name="Lenhard B."/>
            <person name="Wells C."/>
            <person name="Kodzius R."/>
            <person name="Shimokawa K."/>
            <person name="Bajic V.B."/>
            <person name="Brenner S.E."/>
            <person name="Batalov S."/>
            <person name="Forrest A.R."/>
            <person name="Zavolan M."/>
            <person name="Davis M.J."/>
            <person name="Wilming L.G."/>
            <person name="Aidinis V."/>
            <person name="Allen J.E."/>
            <person name="Ambesi-Impiombato A."/>
            <person name="Apweiler R."/>
            <person name="Aturaliya R.N."/>
            <person name="Bailey T.L."/>
            <person name="Bansal M."/>
            <person name="Baxter L."/>
            <person name="Beisel K.W."/>
            <person name="Bersano T."/>
            <person name="Bono H."/>
            <person name="Chalk A.M."/>
            <person name="Chiu K.P."/>
            <person name="Choudhary V."/>
            <person name="Christoffels A."/>
            <person name="Clutterbuck D.R."/>
            <person name="Crowe M.L."/>
            <person name="Dalla E."/>
            <person name="Dalrymple B.P."/>
            <person name="de Bono B."/>
            <person name="Della Gatta G."/>
            <person name="di Bernardo D."/>
            <person name="Down T."/>
            <person name="Engstrom P."/>
            <person name="Fagiolini M."/>
            <person name="Faulkner G."/>
            <person name="Fletcher C.F."/>
            <person name="Fukushima T."/>
            <person name="Furuno M."/>
            <person name="Futaki S."/>
            <person name="Gariboldi M."/>
            <person name="Georgii-Hemming P."/>
            <person name="Gingeras T.R."/>
            <person name="Gojobori T."/>
            <person name="Green R.E."/>
            <person name="Gustincich S."/>
            <person name="Harbers M."/>
            <person name="Hayashi Y."/>
            <person name="Hensch T.K."/>
            <person name="Hirokawa N."/>
            <person name="Hill D."/>
            <person name="Huminiecki L."/>
            <person name="Iacono M."/>
            <person name="Ikeo K."/>
            <person name="Iwama A."/>
            <person name="Ishikawa T."/>
            <person name="Jakt M."/>
            <person name="Kanapin A."/>
            <person name="Katoh M."/>
            <person name="Kawasawa Y."/>
            <person name="Kelso J."/>
            <person name="Kitamura H."/>
            <person name="Kitano H."/>
            <person name="Kollias G."/>
            <person name="Krishnan S.P."/>
            <person name="Kruger A."/>
            <person name="Kummerfeld S.K."/>
            <person name="Kurochkin I.V."/>
            <person name="Lareau L.F."/>
            <person name="Lazarevic D."/>
            <person name="Lipovich L."/>
            <person name="Liu J."/>
            <person name="Liuni S."/>
            <person name="McWilliam S."/>
            <person name="Madan Babu M."/>
            <person name="Madera M."/>
            <person name="Marchionni L."/>
            <person name="Matsuda H."/>
            <person name="Matsuzawa S."/>
            <person name="Miki H."/>
            <person name="Mignone F."/>
            <person name="Miyake S."/>
            <person name="Morris K."/>
            <person name="Mottagui-Tabar S."/>
            <person name="Mulder N."/>
            <person name="Nakano N."/>
            <person name="Nakauchi H."/>
            <person name="Ng P."/>
            <person name="Nilsson R."/>
            <person name="Nishiguchi S."/>
            <person name="Nishikawa S."/>
            <person name="Nori F."/>
            <person name="Ohara O."/>
            <person name="Okazaki Y."/>
            <person name="Orlando V."/>
            <person name="Pang K.C."/>
            <person name="Pavan W.J."/>
            <person name="Pavesi G."/>
            <person name="Pesole G."/>
            <person name="Petrovsky N."/>
            <person name="Piazza S."/>
            <person name="Reed J."/>
            <person name="Reid J.F."/>
            <person name="Ring B.Z."/>
            <person name="Ringwald M."/>
            <person name="Rost B."/>
            <person name="Ruan Y."/>
            <person name="Salzberg S.L."/>
            <person name="Sandelin A."/>
            <person name="Schneider C."/>
            <person name="Schoenbach C."/>
            <person name="Sekiguchi K."/>
            <person name="Semple C.A."/>
            <person name="Seno S."/>
            <person name="Sessa L."/>
            <person name="Sheng Y."/>
            <person name="Shibata Y."/>
            <person name="Shimada H."/>
            <person name="Shimada K."/>
            <person name="Silva D."/>
            <person name="Sinclair B."/>
            <person name="Sperling S."/>
            <person name="Stupka E."/>
            <person name="Sugiura K."/>
            <person name="Sultana R."/>
            <person name="Takenaka Y."/>
            <person name="Taki K."/>
            <person name="Tammoja K."/>
            <person name="Tan S.L."/>
            <person name="Tang S."/>
            <person name="Taylor M.S."/>
            <person name="Tegner J."/>
            <person name="Teichmann S.A."/>
            <person name="Ueda H.R."/>
            <person name="van Nimwegen E."/>
            <person name="Verardo R."/>
            <person name="Wei C.L."/>
            <person name="Yagi K."/>
            <person name="Yamanishi H."/>
            <person name="Zabarovsky E."/>
            <person name="Zhu S."/>
            <person name="Zimmer A."/>
            <person name="Hide W."/>
            <person name="Bult C."/>
            <person name="Grimmond S.M."/>
            <person name="Teasdale R.D."/>
            <person name="Liu E.T."/>
            <person name="Brusic V."/>
            <person name="Quackenbush J."/>
            <person name="Wahlestedt C."/>
            <person name="Mattick J.S."/>
            <person name="Hume D.A."/>
            <person name="Kai C."/>
            <person name="Sasaki D."/>
            <person name="Tomaru Y."/>
            <person name="Fukuda S."/>
            <person name="Kanamori-Katayama M."/>
            <person name="Suzuki M."/>
            <person name="Aoki J."/>
            <person name="Arakawa T."/>
            <person name="Iida J."/>
            <person name="Imamura K."/>
            <person name="Itoh M."/>
            <person name="Kato T."/>
            <person name="Kawaji H."/>
            <person name="Kawagashira N."/>
            <person name="Kawashima T."/>
            <person name="Kojima M."/>
            <person name="Kondo S."/>
            <person name="Konno H."/>
            <person name="Nakano K."/>
            <person name="Ninomiya N."/>
            <person name="Nishio T."/>
            <person name="Okada M."/>
            <person name="Plessy C."/>
            <person name="Shibata K."/>
            <person name="Shiraki T."/>
            <person name="Suzuki S."/>
            <person name="Tagami M."/>
            <person name="Waki K."/>
            <person name="Watahiki A."/>
            <person name="Okamura-Oho Y."/>
            <person name="Suzuki H."/>
            <person name="Kawai J."/>
            <person name="Hayashizaki Y."/>
        </authorList>
    </citation>
    <scope>NUCLEOTIDE SEQUENCE [LARGE SCALE MRNA] (ISOFORM 1)</scope>
    <source>
        <strain>C57BL/6J</strain>
        <tissue>Retina</tissue>
    </source>
</reference>
<reference key="2">
    <citation type="journal article" date="2009" name="PLoS Biol.">
        <title>Lineage-specific biology revealed by a finished genome assembly of the mouse.</title>
        <authorList>
            <person name="Church D.M."/>
            <person name="Goodstadt L."/>
            <person name="Hillier L.W."/>
            <person name="Zody M.C."/>
            <person name="Goldstein S."/>
            <person name="She X."/>
            <person name="Bult C.J."/>
            <person name="Agarwala R."/>
            <person name="Cherry J.L."/>
            <person name="DiCuccio M."/>
            <person name="Hlavina W."/>
            <person name="Kapustin Y."/>
            <person name="Meric P."/>
            <person name="Maglott D."/>
            <person name="Birtle Z."/>
            <person name="Marques A.C."/>
            <person name="Graves T."/>
            <person name="Zhou S."/>
            <person name="Teague B."/>
            <person name="Potamousis K."/>
            <person name="Churas C."/>
            <person name="Place M."/>
            <person name="Herschleb J."/>
            <person name="Runnheim R."/>
            <person name="Forrest D."/>
            <person name="Amos-Landgraf J."/>
            <person name="Schwartz D.C."/>
            <person name="Cheng Z."/>
            <person name="Lindblad-Toh K."/>
            <person name="Eichler E.E."/>
            <person name="Ponting C.P."/>
        </authorList>
    </citation>
    <scope>NUCLEOTIDE SEQUENCE [LARGE SCALE GENOMIC DNA]</scope>
    <source>
        <strain>C57BL/6J</strain>
    </source>
</reference>
<reference key="3">
    <citation type="journal article" date="2004" name="Genome Res.">
        <title>The status, quality, and expansion of the NIH full-length cDNA project: the Mammalian Gene Collection (MGC).</title>
        <authorList>
            <consortium name="The MGC Project Team"/>
        </authorList>
    </citation>
    <scope>NUCLEOTIDE SEQUENCE [LARGE SCALE MRNA] (ISOFORM 2)</scope>
    <source>
        <tissue>Brain</tissue>
    </source>
</reference>
<reference key="4">
    <citation type="journal article" date="2003" name="DNA Res.">
        <title>Prediction of the coding sequences of mouse homologues of KIAA gene: II. The complete nucleotide sequences of 400 mouse KIAA-homologous cDNAs identified by screening of terminal sequences of cDNA clones randomly sampled from size-fractionated libraries.</title>
        <authorList>
            <person name="Okazaki N."/>
            <person name="Kikuno R."/>
            <person name="Ohara R."/>
            <person name="Inamoto S."/>
            <person name="Aizawa H."/>
            <person name="Yuasa S."/>
            <person name="Nakajima D."/>
            <person name="Nagase T."/>
            <person name="Ohara O."/>
            <person name="Koga H."/>
        </authorList>
    </citation>
    <scope>NUCLEOTIDE SEQUENCE [LARGE SCALE MRNA] OF 189-1072 (ISOFORM 1)</scope>
    <source>
        <tissue>Brain</tissue>
    </source>
</reference>
<reference key="5">
    <citation type="submission" date="2003-12" db="EMBL/GenBank/DDBJ databases">
        <authorList>
            <person name="Okazaki N."/>
            <person name="Kikuno R."/>
            <person name="Nagase T."/>
            <person name="Ohara O."/>
            <person name="Koga H."/>
        </authorList>
    </citation>
    <scope>SEQUENCE REVISION</scope>
</reference>
<reference key="6">
    <citation type="submission" date="2009-01" db="UniProtKB">
        <authorList>
            <person name="Lubec G."/>
            <person name="Sunyer B."/>
            <person name="Chen W.-Q."/>
        </authorList>
    </citation>
    <scope>PROTEIN SEQUENCE OF 735-749</scope>
    <scope>IDENTIFICATION BY MASS SPECTROMETRY</scope>
    <source>
        <strain>OF1</strain>
        <tissue>Hippocampus</tissue>
    </source>
</reference>
<reference key="7">
    <citation type="journal article" date="2010" name="Cell">
        <title>A tissue-specific atlas of mouse protein phosphorylation and expression.</title>
        <authorList>
            <person name="Huttlin E.L."/>
            <person name="Jedrychowski M.P."/>
            <person name="Elias J.E."/>
            <person name="Goswami T."/>
            <person name="Rad R."/>
            <person name="Beausoleil S.A."/>
            <person name="Villen J."/>
            <person name="Haas W."/>
            <person name="Sowa M.E."/>
            <person name="Gygi S.P."/>
        </authorList>
    </citation>
    <scope>PHOSPHORYLATION [LARGE SCALE ANALYSIS] AT SER-852; SER-859 AND THR-861</scope>
    <scope>IDENTIFICATION BY MASS SPECTROMETRY [LARGE SCALE ANALYSIS]</scope>
    <source>
        <tissue>Brain</tissue>
    </source>
</reference>
<organism>
    <name type="scientific">Mus musculus</name>
    <name type="common">Mouse</name>
    <dbReference type="NCBI Taxonomy" id="10090"/>
    <lineage>
        <taxon>Eukaryota</taxon>
        <taxon>Metazoa</taxon>
        <taxon>Chordata</taxon>
        <taxon>Craniata</taxon>
        <taxon>Vertebrata</taxon>
        <taxon>Euteleostomi</taxon>
        <taxon>Mammalia</taxon>
        <taxon>Eutheria</taxon>
        <taxon>Euarchontoglires</taxon>
        <taxon>Glires</taxon>
        <taxon>Rodentia</taxon>
        <taxon>Myomorpha</taxon>
        <taxon>Muroidea</taxon>
        <taxon>Muridae</taxon>
        <taxon>Murinae</taxon>
        <taxon>Mus</taxon>
        <taxon>Mus</taxon>
    </lineage>
</organism>
<evidence type="ECO:0000250" key="1"/>
<evidence type="ECO:0000250" key="2">
    <source>
        <dbReference type="UniProtKB" id="Q9JIR1"/>
    </source>
</evidence>
<evidence type="ECO:0000255" key="3">
    <source>
        <dbReference type="PROSITE-ProRule" id="PRU00192"/>
    </source>
</evidence>
<evidence type="ECO:0000255" key="4">
    <source>
        <dbReference type="PROSITE-ProRule" id="PRU00316"/>
    </source>
</evidence>
<evidence type="ECO:0000256" key="5">
    <source>
        <dbReference type="SAM" id="MobiDB-lite"/>
    </source>
</evidence>
<evidence type="ECO:0000303" key="6">
    <source>
    </source>
</evidence>
<evidence type="ECO:0000305" key="7"/>
<evidence type="ECO:0007744" key="8">
    <source>
    </source>
</evidence>
<feature type="chain" id="PRO_0000221384" description="RIMS-binding protein 2">
    <location>
        <begin position="1"/>
        <end position="1072"/>
    </location>
</feature>
<feature type="domain" description="SH3 1" evidence="3">
    <location>
        <begin position="181"/>
        <end position="248"/>
    </location>
</feature>
<feature type="domain" description="Fibronectin type-III 1" evidence="4">
    <location>
        <begin position="311"/>
        <end position="404"/>
    </location>
</feature>
<feature type="domain" description="Fibronectin type-III 2" evidence="4">
    <location>
        <begin position="407"/>
        <end position="489"/>
    </location>
</feature>
<feature type="domain" description="Fibronectin type-III 3" evidence="4">
    <location>
        <begin position="503"/>
        <end position="604"/>
    </location>
</feature>
<feature type="domain" description="SH3 2" evidence="3">
    <location>
        <begin position="868"/>
        <end position="936"/>
    </location>
</feature>
<feature type="domain" description="SH3 3" evidence="3">
    <location>
        <begin position="972"/>
        <end position="1039"/>
    </location>
</feature>
<feature type="region of interest" description="Disordered" evidence="5">
    <location>
        <begin position="597"/>
        <end position="681"/>
    </location>
</feature>
<feature type="region of interest" description="Disordered" evidence="5">
    <location>
        <begin position="713"/>
        <end position="800"/>
    </location>
</feature>
<feature type="region of interest" description="Disordered" evidence="5">
    <location>
        <begin position="1044"/>
        <end position="1072"/>
    </location>
</feature>
<feature type="compositionally biased region" description="Pro residues" evidence="5">
    <location>
        <begin position="599"/>
        <end position="615"/>
    </location>
</feature>
<feature type="compositionally biased region" description="Basic and acidic residues" evidence="5">
    <location>
        <begin position="620"/>
        <end position="635"/>
    </location>
</feature>
<feature type="compositionally biased region" description="Low complexity" evidence="5">
    <location>
        <begin position="660"/>
        <end position="670"/>
    </location>
</feature>
<feature type="compositionally biased region" description="Basic and acidic residues" evidence="5">
    <location>
        <begin position="730"/>
        <end position="743"/>
    </location>
</feature>
<feature type="compositionally biased region" description="Basic and acidic residues" evidence="5">
    <location>
        <begin position="754"/>
        <end position="765"/>
    </location>
</feature>
<feature type="compositionally biased region" description="Acidic residues" evidence="5">
    <location>
        <begin position="771"/>
        <end position="781"/>
    </location>
</feature>
<feature type="compositionally biased region" description="Basic residues" evidence="5">
    <location>
        <begin position="1060"/>
        <end position="1072"/>
    </location>
</feature>
<feature type="modified residue" description="Phosphoserine" evidence="2">
    <location>
        <position position="720"/>
    </location>
</feature>
<feature type="modified residue" description="Phosphoserine" evidence="2">
    <location>
        <position position="728"/>
    </location>
</feature>
<feature type="modified residue" description="Phosphoserine" evidence="8">
    <location>
        <position position="852"/>
    </location>
</feature>
<feature type="modified residue" description="Phosphoserine" evidence="8">
    <location>
        <position position="859"/>
    </location>
</feature>
<feature type="modified residue" description="Phosphothreonine" evidence="8">
    <location>
        <position position="861"/>
    </location>
</feature>
<feature type="splice variant" id="VSP_037437" description="In isoform 2." evidence="6">
    <original>KKSVHFTP</original>
    <variation>VSQPP</variation>
    <location>
        <begin position="1065"/>
        <end position="1072"/>
    </location>
</feature>
<feature type="sequence conflict" description="In Ref. 1; AK044685." evidence="7" ref="1">
    <original>E</original>
    <variation>Q</variation>
    <location>
        <position position="76"/>
    </location>
</feature>
<feature type="sequence conflict" description="In Ref. 1; AK044685 and 4; BAC65527." evidence="7" ref="1 4">
    <original>A</original>
    <variation>V</variation>
    <location>
        <position position="714"/>
    </location>
</feature>
<feature type="sequence conflict" description="In Ref. 1; AK044685." evidence="7" ref="1">
    <location>
        <position position="1065"/>
    </location>
</feature>
<gene>
    <name type="primary">Rimbp2</name>
    <name type="synonym">Kiaa0318</name>
    <name type="synonym">Rbp2</name>
</gene>
<protein>
    <recommendedName>
        <fullName>RIMS-binding protein 2</fullName>
        <shortName>RIM-BP2</shortName>
    </recommendedName>
</protein>
<keyword id="KW-0025">Alternative splicing</keyword>
<keyword id="KW-1003">Cell membrane</keyword>
<keyword id="KW-0903">Direct protein sequencing</keyword>
<keyword id="KW-0472">Membrane</keyword>
<keyword id="KW-0597">Phosphoprotein</keyword>
<keyword id="KW-1185">Reference proteome</keyword>
<keyword id="KW-0677">Repeat</keyword>
<keyword id="KW-0728">SH3 domain</keyword>
<keyword id="KW-0770">Synapse</keyword>
<name>RIMB2_MOUSE</name>
<proteinExistence type="evidence at protein level"/>
<sequence>MREAAERRQQLELEHEQALAFLNAKQQEIQLLQQAQVEAKKEHEGAVQLLESKVRELEEKCRVQSEQFNLLSRDLEKFRQHTGSIDLLGSSSVALLDVPLAPGKPFPQYMNGLATSIHKGHEGPTGHYSVIGDYIPLSGDKLESPCVKPSFLLRSSSPRCRFESEMDNDRNSNNSKQSSSGKVHLCVARYSYNPFDGPNENPEAELPLTAGKYLYVYGDMDEDGFYEGELLDGQRGLVPSNFVDFIQDNESRLAGTLGSEQDQNFLNHSGISLERDSILHLHSPTQVDSGITDNGGGTLDVNIDDIGEDTVPYPRKITLIKQLAKSVIVGWEPPAVPPGWGTVSSYNVLVDKETRMSLALGRRTKALIEKLNTAACTYRISVQCVTSRGNSDELQCTLLVGKDVVVAPSQLRVDNITQISAQLSWLPTNSNYSHIIFLNEEELDIVKAARYKYQFFNLRPNMAYKVKVLAQPHQMPWQLPLEQREKKEACVEFSTLPAGPPAPPQDVTVHAGATAASVQVSWKPPALTPTGLSNGANVTGYGVYAKGQRVAEVIAPTADGTAVELIRLRSLEAKAVSVRTLSVQGESMDSALAAIPPDLLVPPAPHPRTAPPPKPLASDMDTKDQHLGPHVKVDESWEQSRSPGPAHGHMLEPPDMHSAGPGRRSPSPSRILPQPQGAPVSTTVAKAMAREAAQRVAESNRLEKRSLFLEQSSAGQYTNSDEEDGYASPEVKRRGTSVDDFLKGSELGKQPHCCHGDEYHTESSRGSDLSDIMEEDEEELYSEMQLEDGGRRRPSGTSHNALKILGNSTLMGRADRMEHVSRRYSHSGGGSHRHRPAMAPSIDEYTGRDHLSPDFYDESETDPGAEELPARIFVALFDYDPLTMSPNPDAAEEELPFKEGQIIKVYGDKDADGFYRGETCARLGLIPCNMVSEIHADDEEMMDQLLRQGFLPLNTPVEKIERSRRSGRGHSVPTRRMVALYDYDPRESSPNVDVEAELPFCTGDIITVFGEIDEDGFYYGELNGQKGLVPSNFLEEVPDDVEVHLSDAPPHYSHDPPMRSKAKRKKSVHFTP</sequence>